<comment type="function">
    <text evidence="1">PPIases accelerate the folding of proteins. It catalyzes the cis-trans isomerization of proline imidic peptide bonds in oligopeptides (By similarity).</text>
</comment>
<comment type="catalytic activity">
    <reaction>
        <text>[protein]-peptidylproline (omega=180) = [protein]-peptidylproline (omega=0)</text>
        <dbReference type="Rhea" id="RHEA:16237"/>
        <dbReference type="Rhea" id="RHEA-COMP:10747"/>
        <dbReference type="Rhea" id="RHEA-COMP:10748"/>
        <dbReference type="ChEBI" id="CHEBI:83833"/>
        <dbReference type="ChEBI" id="CHEBI:83834"/>
        <dbReference type="EC" id="5.2.1.8"/>
    </reaction>
</comment>
<comment type="activity regulation">
    <text evidence="1">Inhibited by cyclosporin A (CsA).</text>
</comment>
<comment type="subcellular location">
    <molecule>Isoform Long</molecule>
    <subcellularLocation>
        <location evidence="5">Membrane</location>
        <topology evidence="5">Single-pass membrane protein</topology>
    </subcellularLocation>
</comment>
<comment type="subcellular location">
    <molecule>Isoform Short</molecule>
    <subcellularLocation>
        <location evidence="1">Endoplasmic reticulum lumen</location>
    </subcellularLocation>
</comment>
<comment type="alternative products">
    <event type="alternative splicing"/>
    <isoform>
        <id>Q7S7Z6-1</id>
        <name>Long</name>
        <sequence type="displayed"/>
    </isoform>
    <isoform>
        <id>Q7S7Z6-2</id>
        <name>Short</name>
        <sequence type="described" ref="VSP_029975"/>
    </isoform>
</comment>
<comment type="miscellaneous">
    <molecule>Isoform Short</molecule>
    <text evidence="5">Lacks the C-terminal transmembrane domain, but has an ER retention motif at its extreme C-terminus.</text>
</comment>
<comment type="similarity">
    <text evidence="5">Belongs to the cyclophilin-type PPIase family. PPIase B subfamily.</text>
</comment>
<keyword id="KW-0025">Alternative splicing</keyword>
<keyword id="KW-0256">Endoplasmic reticulum</keyword>
<keyword id="KW-0325">Glycoprotein</keyword>
<keyword id="KW-0413">Isomerase</keyword>
<keyword id="KW-0472">Membrane</keyword>
<keyword id="KW-1185">Reference proteome</keyword>
<keyword id="KW-0697">Rotamase</keyword>
<keyword id="KW-0732">Signal</keyword>
<keyword id="KW-0812">Transmembrane</keyword>
<keyword id="KW-1133">Transmembrane helix</keyword>
<proteinExistence type="inferred from homology"/>
<sequence length="285" mass="30743">MFSLRRLLLAATLFLGAMLLFAQSAEAAKGPKITHKVYFDIEQGDKPLGRIVMGLYGKTVPKTAENFRALATGEKGFGYEGSTFHRVIKQFMIQGGDFTKGDGTGGKSIYGDKFPDENFKLKHSKKGLLSMANAGKDTNGSQFFITTVITSWLDGKHVVFGEVLEGYDVVEKIENTKTGPRDAPAEPIKIAKSGELEVPPEGLEGQSEWASPAYANEDEKPAAPVPVTDAKPPAHDSIPAATADDDDTGAPLFAKVLFFGVLVLGLVLYIRLRRAPKGTYGKGME</sequence>
<accession>Q7S7Z6</accession>
<accession>A7UWE9</accession>
<accession>A7UWF0</accession>
<accession>Q8X0S3</accession>
<accession>V5IM99</accession>
<accession>V5IP42</accession>
<evidence type="ECO:0000250" key="1"/>
<evidence type="ECO:0000255" key="2"/>
<evidence type="ECO:0000255" key="3">
    <source>
        <dbReference type="PROSITE-ProRule" id="PRU00156"/>
    </source>
</evidence>
<evidence type="ECO:0000256" key="4">
    <source>
        <dbReference type="SAM" id="MobiDB-lite"/>
    </source>
</evidence>
<evidence type="ECO:0000305" key="5"/>
<feature type="signal peptide" evidence="2">
    <location>
        <begin position="1"/>
        <end position="27"/>
    </location>
</feature>
<feature type="chain" id="PRO_0000233049" description="Peptidyl-prolyl cis-trans isomerase B">
    <location>
        <begin position="28"/>
        <end position="285"/>
    </location>
</feature>
<feature type="transmembrane region" description="Helical" evidence="2">
    <location>
        <begin position="250"/>
        <end position="270"/>
    </location>
</feature>
<feature type="domain" description="PPIase cyclophilin-type" evidence="3">
    <location>
        <begin position="38"/>
        <end position="195"/>
    </location>
</feature>
<feature type="region of interest" description="Disordered" evidence="4">
    <location>
        <begin position="217"/>
        <end position="243"/>
    </location>
</feature>
<feature type="glycosylation site" description="N-linked (GlcNAc...) asparagine" evidence="2">
    <location>
        <position position="139"/>
    </location>
</feature>
<feature type="splice variant" id="VSP_029975" description="In isoform Short." evidence="5">
    <original>LEGQSEWASPAYANEDEKPAAPVPVTDAKPPAHDSIPAATADDDDTGAPLFAKVLFFGVLVLGLVLYIRLRRAPKGTYGKGME</original>
    <variation>IHVEL</variation>
    <location>
        <begin position="203"/>
        <end position="285"/>
    </location>
</feature>
<reference key="1">
    <citation type="journal article" date="2003" name="Nucleic Acids Res.">
        <title>What's in the genome of a filamentous fungus? Analysis of the Neurospora genome sequence.</title>
        <authorList>
            <person name="Mannhaupt G."/>
            <person name="Montrone C."/>
            <person name="Haase D."/>
            <person name="Mewes H.-W."/>
            <person name="Aign V."/>
            <person name="Hoheisel J.D."/>
            <person name="Fartmann B."/>
            <person name="Nyakatura G."/>
            <person name="Kempken F."/>
            <person name="Maier J."/>
            <person name="Schulte U."/>
        </authorList>
    </citation>
    <scope>NUCLEOTIDE SEQUENCE [LARGE SCALE GENOMIC DNA]</scope>
    <source>
        <strain>ATCC 24698 / 74-OR23-1A / CBS 708.71 / DSM 1257 / FGSC 987</strain>
    </source>
</reference>
<reference key="2">
    <citation type="journal article" date="2003" name="Nature">
        <title>The genome sequence of the filamentous fungus Neurospora crassa.</title>
        <authorList>
            <person name="Galagan J.E."/>
            <person name="Calvo S.E."/>
            <person name="Borkovich K.A."/>
            <person name="Selker E.U."/>
            <person name="Read N.D."/>
            <person name="Jaffe D.B."/>
            <person name="FitzHugh W."/>
            <person name="Ma L.-J."/>
            <person name="Smirnov S."/>
            <person name="Purcell S."/>
            <person name="Rehman B."/>
            <person name="Elkins T."/>
            <person name="Engels R."/>
            <person name="Wang S."/>
            <person name="Nielsen C.B."/>
            <person name="Butler J."/>
            <person name="Endrizzi M."/>
            <person name="Qui D."/>
            <person name="Ianakiev P."/>
            <person name="Bell-Pedersen D."/>
            <person name="Nelson M.A."/>
            <person name="Werner-Washburne M."/>
            <person name="Selitrennikoff C.P."/>
            <person name="Kinsey J.A."/>
            <person name="Braun E.L."/>
            <person name="Zelter A."/>
            <person name="Schulte U."/>
            <person name="Kothe G.O."/>
            <person name="Jedd G."/>
            <person name="Mewes H.-W."/>
            <person name="Staben C."/>
            <person name="Marcotte E."/>
            <person name="Greenberg D."/>
            <person name="Roy A."/>
            <person name="Foley K."/>
            <person name="Naylor J."/>
            <person name="Stange-Thomann N."/>
            <person name="Barrett R."/>
            <person name="Gnerre S."/>
            <person name="Kamal M."/>
            <person name="Kamvysselis M."/>
            <person name="Mauceli E.W."/>
            <person name="Bielke C."/>
            <person name="Rudd S."/>
            <person name="Frishman D."/>
            <person name="Krystofova S."/>
            <person name="Rasmussen C."/>
            <person name="Metzenberg R.L."/>
            <person name="Perkins D.D."/>
            <person name="Kroken S."/>
            <person name="Cogoni C."/>
            <person name="Macino G."/>
            <person name="Catcheside D.E.A."/>
            <person name="Li W."/>
            <person name="Pratt R.J."/>
            <person name="Osmani S.A."/>
            <person name="DeSouza C.P.C."/>
            <person name="Glass N.L."/>
            <person name="Orbach M.J."/>
            <person name="Berglund J.A."/>
            <person name="Voelker R."/>
            <person name="Yarden O."/>
            <person name="Plamann M."/>
            <person name="Seiler S."/>
            <person name="Dunlap J.C."/>
            <person name="Radford A."/>
            <person name="Aramayo R."/>
            <person name="Natvig D.O."/>
            <person name="Alex L.A."/>
            <person name="Mannhaupt G."/>
            <person name="Ebbole D.J."/>
            <person name="Freitag M."/>
            <person name="Paulsen I."/>
            <person name="Sachs M.S."/>
            <person name="Lander E.S."/>
            <person name="Nusbaum C."/>
            <person name="Birren B.W."/>
        </authorList>
    </citation>
    <scope>NUCLEOTIDE SEQUENCE [LARGE SCALE GENOMIC DNA]</scope>
    <source>
        <strain>ATCC 24698 / 74-OR23-1A / CBS 708.71 / DSM 1257 / FGSC 987</strain>
    </source>
</reference>
<reference key="3">
    <citation type="submission" date="2006-02" db="UniProtKB">
        <authorList>
            <person name="Pemberton T.J."/>
        </authorList>
    </citation>
    <scope>REVISION OF GENE MODEL</scope>
</reference>
<dbReference type="EC" id="5.2.1.8"/>
<dbReference type="EMBL" id="AL670011">
    <property type="protein sequence ID" value="CAD21421.1"/>
    <property type="molecule type" value="Genomic_DNA"/>
</dbReference>
<dbReference type="EMBL" id="CM002240">
    <property type="protein sequence ID" value="ESA42515.1"/>
    <property type="molecule type" value="Genomic_DNA"/>
</dbReference>
<dbReference type="EMBL" id="CM002240">
    <property type="protein sequence ID" value="ESA42516.1"/>
    <property type="molecule type" value="Genomic_DNA"/>
</dbReference>
<dbReference type="RefSeq" id="XP_011394481.1">
    <molecule id="Q7S7Z6-2"/>
    <property type="nucleotide sequence ID" value="XM_011396179.1"/>
</dbReference>
<dbReference type="RefSeq" id="XP_011394482.1">
    <molecule id="Q7S7Z6-1"/>
    <property type="nucleotide sequence ID" value="XM_011396180.1"/>
</dbReference>
<dbReference type="SMR" id="Q7S7Z6"/>
<dbReference type="FunCoup" id="Q7S7Z6">
    <property type="interactions" value="624"/>
</dbReference>
<dbReference type="IntAct" id="Q7S7Z6">
    <property type="interactions" value="4"/>
</dbReference>
<dbReference type="MINT" id="Q7S7Z6"/>
<dbReference type="STRING" id="367110.Q7S7Z6"/>
<dbReference type="GlyCosmos" id="Q7S7Z6">
    <property type="glycosylation" value="1 site, No reported glycans"/>
</dbReference>
<dbReference type="PaxDb" id="5141-EFNCRP00000004282"/>
<dbReference type="EnsemblFungi" id="ESA42515">
    <molecule id="Q7S7Z6-1"/>
    <property type="protein sequence ID" value="ESA42515"/>
    <property type="gene ID" value="NCU01200"/>
</dbReference>
<dbReference type="EnsemblFungi" id="ESA42516">
    <molecule id="Q7S7Z6-2"/>
    <property type="protein sequence ID" value="ESA42516"/>
    <property type="gene ID" value="NCU01200"/>
</dbReference>
<dbReference type="GeneID" id="5847555"/>
<dbReference type="KEGG" id="ncr:NCU01200"/>
<dbReference type="VEuPathDB" id="FungiDB:NCU01200"/>
<dbReference type="HOGENOM" id="CLU_012062_4_1_1"/>
<dbReference type="InParanoid" id="Q7S7Z6"/>
<dbReference type="OMA" id="ENHEITH"/>
<dbReference type="OrthoDB" id="193499at2759"/>
<dbReference type="Proteomes" id="UP000001805">
    <property type="component" value="Chromosome 2, Linkage Group V"/>
</dbReference>
<dbReference type="GO" id="GO:0005737">
    <property type="term" value="C:cytoplasm"/>
    <property type="evidence" value="ECO:0000318"/>
    <property type="project" value="GO_Central"/>
</dbReference>
<dbReference type="GO" id="GO:0005783">
    <property type="term" value="C:endoplasmic reticulum"/>
    <property type="evidence" value="ECO:0000318"/>
    <property type="project" value="GO_Central"/>
</dbReference>
<dbReference type="GO" id="GO:0005788">
    <property type="term" value="C:endoplasmic reticulum lumen"/>
    <property type="evidence" value="ECO:0007669"/>
    <property type="project" value="UniProtKB-SubCell"/>
</dbReference>
<dbReference type="GO" id="GO:0016020">
    <property type="term" value="C:membrane"/>
    <property type="evidence" value="ECO:0007669"/>
    <property type="project" value="UniProtKB-SubCell"/>
</dbReference>
<dbReference type="GO" id="GO:0016018">
    <property type="term" value="F:cyclosporin A binding"/>
    <property type="evidence" value="ECO:0000318"/>
    <property type="project" value="GO_Central"/>
</dbReference>
<dbReference type="GO" id="GO:0003755">
    <property type="term" value="F:peptidyl-prolyl cis-trans isomerase activity"/>
    <property type="evidence" value="ECO:0000318"/>
    <property type="project" value="GO_Central"/>
</dbReference>
<dbReference type="GO" id="GO:0006457">
    <property type="term" value="P:protein folding"/>
    <property type="evidence" value="ECO:0000318"/>
    <property type="project" value="GO_Central"/>
</dbReference>
<dbReference type="CDD" id="cd01926">
    <property type="entry name" value="cyclophilin_ABH_like"/>
    <property type="match status" value="1"/>
</dbReference>
<dbReference type="FunFam" id="2.40.100.10:FF:000001">
    <property type="entry name" value="Peptidyl-prolyl cis-trans isomerase"/>
    <property type="match status" value="1"/>
</dbReference>
<dbReference type="Gene3D" id="2.40.100.10">
    <property type="entry name" value="Cyclophilin-like"/>
    <property type="match status" value="1"/>
</dbReference>
<dbReference type="InterPro" id="IPR029000">
    <property type="entry name" value="Cyclophilin-like_dom_sf"/>
</dbReference>
<dbReference type="InterPro" id="IPR020892">
    <property type="entry name" value="Cyclophilin-type_PPIase_CS"/>
</dbReference>
<dbReference type="InterPro" id="IPR002130">
    <property type="entry name" value="Cyclophilin-type_PPIase_dom"/>
</dbReference>
<dbReference type="PANTHER" id="PTHR11071">
    <property type="entry name" value="PEPTIDYL-PROLYL CIS-TRANS ISOMERASE"/>
    <property type="match status" value="1"/>
</dbReference>
<dbReference type="PANTHER" id="PTHR11071:SF561">
    <property type="entry name" value="PEPTIDYL-PROLYL CIS-TRANS ISOMERASE D-RELATED"/>
    <property type="match status" value="1"/>
</dbReference>
<dbReference type="Pfam" id="PF00160">
    <property type="entry name" value="Pro_isomerase"/>
    <property type="match status" value="1"/>
</dbReference>
<dbReference type="PRINTS" id="PR00153">
    <property type="entry name" value="CSAPPISMRASE"/>
</dbReference>
<dbReference type="SUPFAM" id="SSF50891">
    <property type="entry name" value="Cyclophilin-like"/>
    <property type="match status" value="1"/>
</dbReference>
<dbReference type="PROSITE" id="PS00170">
    <property type="entry name" value="CSA_PPIASE_1"/>
    <property type="match status" value="1"/>
</dbReference>
<dbReference type="PROSITE" id="PS50072">
    <property type="entry name" value="CSA_PPIASE_2"/>
    <property type="match status" value="1"/>
</dbReference>
<protein>
    <recommendedName>
        <fullName>Peptidyl-prolyl cis-trans isomerase B</fullName>
        <shortName>PPIase B</shortName>
        <ecNumber>5.2.1.8</ecNumber>
    </recommendedName>
    <alternativeName>
        <fullName>Rotamase B</fullName>
    </alternativeName>
</protein>
<gene>
    <name type="primary">cpr2</name>
    <name type="ORF">18F11.170</name>
    <name type="ORF">NCU01200</name>
</gene>
<name>PPIB_NEUCR</name>
<organism>
    <name type="scientific">Neurospora crassa (strain ATCC 24698 / 74-OR23-1A / CBS 708.71 / DSM 1257 / FGSC 987)</name>
    <dbReference type="NCBI Taxonomy" id="367110"/>
    <lineage>
        <taxon>Eukaryota</taxon>
        <taxon>Fungi</taxon>
        <taxon>Dikarya</taxon>
        <taxon>Ascomycota</taxon>
        <taxon>Pezizomycotina</taxon>
        <taxon>Sordariomycetes</taxon>
        <taxon>Sordariomycetidae</taxon>
        <taxon>Sordariales</taxon>
        <taxon>Sordariaceae</taxon>
        <taxon>Neurospora</taxon>
    </lineage>
</organism>